<name>ALG3_PICST</name>
<proteinExistence type="inferred from homology"/>
<reference key="1">
    <citation type="journal article" date="2007" name="Nat. Biotechnol.">
        <title>Genome sequence of the lignocellulose-bioconverting and xylose-fermenting yeast Pichia stipitis.</title>
        <authorList>
            <person name="Jeffries T.W."/>
            <person name="Grigoriev I.V."/>
            <person name="Grimwood J."/>
            <person name="Laplaza J.M."/>
            <person name="Aerts A."/>
            <person name="Salamov A."/>
            <person name="Schmutz J."/>
            <person name="Lindquist E."/>
            <person name="Dehal P."/>
            <person name="Shapiro H."/>
            <person name="Jin Y.-S."/>
            <person name="Passoth V."/>
            <person name="Richardson P.M."/>
        </authorList>
    </citation>
    <scope>NUCLEOTIDE SEQUENCE [LARGE SCALE GENOMIC DNA]</scope>
    <source>
        <strain>ATCC 58785 / CBS 6054 / NBRC 10063 / NRRL Y-11545</strain>
    </source>
</reference>
<feature type="chain" id="PRO_0000350931" description="Dol-P-Man:Man(5)GlcNAc(2)-PP-Dol alpha-1,3-mannosyltransferase">
    <location>
        <begin position="1"/>
        <end position="477"/>
    </location>
</feature>
<feature type="topological domain" description="Lumenal" evidence="2">
    <location>
        <begin position="1"/>
        <end position="48"/>
    </location>
</feature>
<feature type="transmembrane region" description="Helical" evidence="2">
    <location>
        <begin position="49"/>
        <end position="69"/>
    </location>
</feature>
<feature type="topological domain" description="Cytoplasmic" evidence="2">
    <location>
        <begin position="70"/>
        <end position="131"/>
    </location>
</feature>
<feature type="transmembrane region" description="Helical" evidence="2">
    <location>
        <begin position="132"/>
        <end position="152"/>
    </location>
</feature>
<feature type="topological domain" description="Lumenal" evidence="2">
    <location>
        <begin position="153"/>
        <end position="172"/>
    </location>
</feature>
<feature type="transmembrane region" description="Helical" evidence="2">
    <location>
        <begin position="173"/>
        <end position="193"/>
    </location>
</feature>
<feature type="topological domain" description="Cytoplasmic" evidence="2">
    <location>
        <begin position="194"/>
        <end position="203"/>
    </location>
</feature>
<feature type="transmembrane region" description="Helical" evidence="2">
    <location>
        <begin position="204"/>
        <end position="224"/>
    </location>
</feature>
<feature type="topological domain" description="Lumenal" evidence="2">
    <location>
        <position position="225"/>
    </location>
</feature>
<feature type="transmembrane region" description="Helical" evidence="2">
    <location>
        <begin position="226"/>
        <end position="243"/>
    </location>
</feature>
<feature type="topological domain" description="Cytoplasmic" evidence="2">
    <location>
        <begin position="244"/>
        <end position="247"/>
    </location>
</feature>
<feature type="transmembrane region" description="Helical" evidence="2">
    <location>
        <begin position="248"/>
        <end position="270"/>
    </location>
</feature>
<feature type="topological domain" description="Lumenal" evidence="2">
    <location>
        <begin position="271"/>
        <end position="316"/>
    </location>
</feature>
<feature type="transmembrane region" description="Helical" evidence="2">
    <location>
        <begin position="317"/>
        <end position="337"/>
    </location>
</feature>
<feature type="topological domain" description="Cytoplasmic" evidence="2">
    <location>
        <begin position="338"/>
        <end position="371"/>
    </location>
</feature>
<feature type="transmembrane region" description="Helical" evidence="2">
    <location>
        <begin position="372"/>
        <end position="392"/>
    </location>
</feature>
<feature type="topological domain" description="Lumenal" evidence="2">
    <location>
        <begin position="393"/>
        <end position="406"/>
    </location>
</feature>
<feature type="transmembrane region" description="Helical" evidence="2">
    <location>
        <begin position="407"/>
        <end position="427"/>
    </location>
</feature>
<feature type="topological domain" description="Cytoplasmic" evidence="2">
    <location>
        <begin position="428"/>
        <end position="433"/>
    </location>
</feature>
<feature type="transmembrane region" description="Helical" evidence="2">
    <location>
        <begin position="434"/>
        <end position="454"/>
    </location>
</feature>
<feature type="topological domain" description="Lumenal" evidence="2">
    <location>
        <begin position="455"/>
        <end position="477"/>
    </location>
</feature>
<dbReference type="EC" id="2.4.1.258" evidence="1"/>
<dbReference type="EMBL" id="CP000498">
    <property type="protein sequence ID" value="ABN66377.2"/>
    <property type="molecule type" value="Genomic_DNA"/>
</dbReference>
<dbReference type="FunCoup" id="A3LTB7">
    <property type="interactions" value="673"/>
</dbReference>
<dbReference type="STRING" id="322104.A3LTB7"/>
<dbReference type="CAZy" id="GT58">
    <property type="family name" value="Glycosyltransferase Family 58"/>
</dbReference>
<dbReference type="KEGG" id="pic:PICST_58095"/>
<dbReference type="eggNOG" id="KOG2762">
    <property type="taxonomic scope" value="Eukaryota"/>
</dbReference>
<dbReference type="HOGENOM" id="CLU_035382_3_0_1"/>
<dbReference type="InParanoid" id="A3LTB7"/>
<dbReference type="OMA" id="PERYGIH"/>
<dbReference type="OrthoDB" id="20028at2759"/>
<dbReference type="UniPathway" id="UPA00378"/>
<dbReference type="Proteomes" id="UP000002258">
    <property type="component" value="Chromosome 4"/>
</dbReference>
<dbReference type="GO" id="GO:0005789">
    <property type="term" value="C:endoplasmic reticulum membrane"/>
    <property type="evidence" value="ECO:0007669"/>
    <property type="project" value="UniProtKB-SubCell"/>
</dbReference>
<dbReference type="GO" id="GO:0052925">
    <property type="term" value="F:dol-P-Man:Man(5)GlcNAc(2)-PP-Dol alpha-1,3-mannosyltransferase activity"/>
    <property type="evidence" value="ECO:0007669"/>
    <property type="project" value="UniProtKB-EC"/>
</dbReference>
<dbReference type="GO" id="GO:0006488">
    <property type="term" value="P:dolichol-linked oligosaccharide biosynthetic process"/>
    <property type="evidence" value="ECO:0007669"/>
    <property type="project" value="EnsemblFungi"/>
</dbReference>
<dbReference type="InterPro" id="IPR007873">
    <property type="entry name" value="Glycosyltransferase_ALG3"/>
</dbReference>
<dbReference type="PANTHER" id="PTHR12646:SF0">
    <property type="entry name" value="DOL-P-MAN:MAN(5)GLCNAC(2)-PP-DOL ALPHA-1,3-MANNOSYLTRANSFERASE"/>
    <property type="match status" value="1"/>
</dbReference>
<dbReference type="PANTHER" id="PTHR12646">
    <property type="entry name" value="NOT56 - RELATED"/>
    <property type="match status" value="1"/>
</dbReference>
<dbReference type="Pfam" id="PF05208">
    <property type="entry name" value="ALG3"/>
    <property type="match status" value="1"/>
</dbReference>
<sequence>MSEPESSVANNDGESTQAPQLAELTLKNVLGDIVNGVHFIIFDPLGNRFVVPVIILLTSIITKVIITKVPYTEIDFVTYMQQIQLVNQGEIDYAEISGDTGPIVYPAGFVQIYQWLYSQTNGGADIATGQSIFGYLMTATVVFVCVAYTMSPTTKPWVLFLLLGSKRLYSIYVLRLFNDCFTTAAMVGVTVFLQQGSYWYSTSSFISFLFAIVGADLFSIAISIKMNALLYLPAVVIIAYFLVGENILLFAIVLAIVPLVQILVGWKFLLPLFDDEAASQIRWNYINNAFNFGRKFLFKWTVNWRFIGEETFLSDKFSILLMGGHIVVLLFFIFTRFLNSKVTGKSIWQLIKDAFKPSSTISSNNKLIDYNVGPKLILLILATTNVIGVLFSRSLHYQFLSWYCWQLPFLLHSTGWNFIVCLVLWGAHEWTWNVYPSTVASSLVLVGILSSVLVGTWRNEAVWFEENNVVDDEKKNE</sequence>
<keyword id="KW-0256">Endoplasmic reticulum</keyword>
<keyword id="KW-0328">Glycosyltransferase</keyword>
<keyword id="KW-0472">Membrane</keyword>
<keyword id="KW-1185">Reference proteome</keyword>
<keyword id="KW-0808">Transferase</keyword>
<keyword id="KW-0812">Transmembrane</keyword>
<keyword id="KW-1133">Transmembrane helix</keyword>
<comment type="function">
    <text evidence="1">Dol-P-Man:Man(5)GlcNAc(2)-PP-Dol alpha-1,3-mannosyltransferase that operates in the biosynthetic pathway of dolichol-linked oligosaccharides, the glycan precursors employed in protein asparagine (N)-glycosylation. The assembly of dolichol-linked oligosaccharides begins on the cytosolic side of the endoplasmic reticulum membrane and finishes in its lumen. The sequential addition of sugars to dolichol pyrophosphate produces dolichol-linked oligosaccharides containing fourteen sugars, including two GlcNAcs, nine mannoses and three glucoses. Once assembled, the oligosaccharide is transferred from the lipid to nascent proteins by oligosaccharyltransferases. In the lumen of the endoplasmic reticulum, adds the first dolichyl beta-D-mannosyl phosphate derived mannose in an alpha-1,3 linkage to Man(5)GlcNAc(2)-PP-dolichol to produce Man(6)GlcNAc(2)-PP-dolichol.</text>
</comment>
<comment type="catalytic activity">
    <reaction evidence="1">
        <text>an alpha-D-Man-(1-&gt;2)-alpha-D-Man-(1-&gt;2)-alpha-D-Man-(1-&gt;3)-[alpha-D-Man-(1-&gt;6)]-beta-D-Man-(1-&gt;4)-beta-D-GlcNAc-(1-&gt;4)-alpha-D-GlcNAc-diphospho-di-trans,poly-cis-dolichol + a di-trans,poly-cis-dolichyl beta-D-mannosyl phosphate = an alpha-D-Man-(1-&gt;2)-alpha-D-Man-(1-&gt;2)-alpha-D-Man-(1-&gt;3)-[alpha-D-Man-(1-&gt;3)-alpha-D-Man-(1-&gt;6)]-beta-D-Man-(1-&gt;4)-beta-D-GlcNAc-(1-&gt;4)-alpha-D-GlcNAc-diphospho-di-trans,poly-cis-dolichol + a di-trans,poly-cis-dolichyl phosphate + H(+)</text>
        <dbReference type="Rhea" id="RHEA:29527"/>
        <dbReference type="Rhea" id="RHEA-COMP:19498"/>
        <dbReference type="Rhea" id="RHEA-COMP:19501"/>
        <dbReference type="Rhea" id="RHEA-COMP:19516"/>
        <dbReference type="Rhea" id="RHEA-COMP:19517"/>
        <dbReference type="ChEBI" id="CHEBI:15378"/>
        <dbReference type="ChEBI" id="CHEBI:57683"/>
        <dbReference type="ChEBI" id="CHEBI:58211"/>
        <dbReference type="ChEBI" id="CHEBI:132515"/>
        <dbReference type="ChEBI" id="CHEBI:132516"/>
        <dbReference type="EC" id="2.4.1.258"/>
    </reaction>
    <physiologicalReaction direction="left-to-right" evidence="1">
        <dbReference type="Rhea" id="RHEA:29528"/>
    </physiologicalReaction>
</comment>
<comment type="pathway">
    <text evidence="1">Protein modification; protein glycosylation.</text>
</comment>
<comment type="subcellular location">
    <subcellularLocation>
        <location evidence="1">Endoplasmic reticulum membrane</location>
        <topology evidence="2">Multi-pass membrane protein</topology>
    </subcellularLocation>
</comment>
<comment type="similarity">
    <text evidence="3">Belongs to the glycosyltransferase ALG3 family.</text>
</comment>
<gene>
    <name type="primary">ALG3</name>
    <name type="ORF">PICST_58095</name>
</gene>
<protein>
    <recommendedName>
        <fullName evidence="1">Dol-P-Man:Man(5)GlcNAc(2)-PP-Dol alpha-1,3-mannosyltransferase</fullName>
        <ecNumber evidence="1">2.4.1.258</ecNumber>
    </recommendedName>
    <alternativeName>
        <fullName>Asparagine-linked glycosylation protein 6</fullName>
    </alternativeName>
    <alternativeName>
        <fullName>Dol-P-Man-dependent alpha(1-3)-mannosyltransferase</fullName>
    </alternativeName>
    <alternativeName>
        <fullName>Dolichyl-P-Man:Man(5)GlcNAc(2)-PP-dolichyl mannosyltransferase</fullName>
    </alternativeName>
</protein>
<evidence type="ECO:0000250" key="1">
    <source>
        <dbReference type="UniProtKB" id="P38179"/>
    </source>
</evidence>
<evidence type="ECO:0000255" key="2"/>
<evidence type="ECO:0000305" key="3"/>
<accession>A3LTB7</accession>
<organism>
    <name type="scientific">Scheffersomyces stipitis (strain ATCC 58785 / CBS 6054 / NBRC 10063 / NRRL Y-11545)</name>
    <name type="common">Yeast</name>
    <name type="synonym">Pichia stipitis</name>
    <dbReference type="NCBI Taxonomy" id="322104"/>
    <lineage>
        <taxon>Eukaryota</taxon>
        <taxon>Fungi</taxon>
        <taxon>Dikarya</taxon>
        <taxon>Ascomycota</taxon>
        <taxon>Saccharomycotina</taxon>
        <taxon>Pichiomycetes</taxon>
        <taxon>Debaryomycetaceae</taxon>
        <taxon>Scheffersomyces</taxon>
    </lineage>
</organism>